<organism>
    <name type="scientific">Acidovorax ebreus (strain TPSY)</name>
    <name type="common">Diaphorobacter sp. (strain TPSY)</name>
    <dbReference type="NCBI Taxonomy" id="535289"/>
    <lineage>
        <taxon>Bacteria</taxon>
        <taxon>Pseudomonadati</taxon>
        <taxon>Pseudomonadota</taxon>
        <taxon>Betaproteobacteria</taxon>
        <taxon>Burkholderiales</taxon>
        <taxon>Comamonadaceae</taxon>
        <taxon>Diaphorobacter</taxon>
    </lineage>
</organism>
<protein>
    <recommendedName>
        <fullName evidence="1">7-cyano-7-deazaguanine synthase</fullName>
        <ecNumber evidence="1">6.3.4.20</ecNumber>
    </recommendedName>
    <alternativeName>
        <fullName evidence="1">7-cyano-7-carbaguanine synthase</fullName>
    </alternativeName>
    <alternativeName>
        <fullName evidence="1">PreQ(0) synthase</fullName>
    </alternativeName>
    <alternativeName>
        <fullName evidence="1">Queuosine biosynthesis protein QueC</fullName>
    </alternativeName>
</protein>
<reference key="1">
    <citation type="submission" date="2009-01" db="EMBL/GenBank/DDBJ databases">
        <title>Complete sequence of Diaphorobacter sp. TPSY.</title>
        <authorList>
            <consortium name="US DOE Joint Genome Institute"/>
            <person name="Lucas S."/>
            <person name="Copeland A."/>
            <person name="Lapidus A."/>
            <person name="Glavina del Rio T."/>
            <person name="Tice H."/>
            <person name="Bruce D."/>
            <person name="Goodwin L."/>
            <person name="Pitluck S."/>
            <person name="Chertkov O."/>
            <person name="Brettin T."/>
            <person name="Detter J.C."/>
            <person name="Han C."/>
            <person name="Larimer F."/>
            <person name="Land M."/>
            <person name="Hauser L."/>
            <person name="Kyrpides N."/>
            <person name="Mikhailova N."/>
            <person name="Coates J.D."/>
        </authorList>
    </citation>
    <scope>NUCLEOTIDE SEQUENCE [LARGE SCALE GENOMIC DNA]</scope>
    <source>
        <strain>TPSY</strain>
    </source>
</reference>
<sequence>MSRLPQRRALVLLSGGQDSATCLAWALARYGHVETLGFDYGQRHRVELDCRQRLIDGVRALPWPGQLGPDHMLTVDVLAQLGGSAMTDDVAIAMQADGLPNTFVPGRNLLFFTLAAALAYRRGLDVLVGGMSETDYSGYPDCRDSTLKALQVALSLGVDRPLTLETPLMWRSKADTWALAQRLGGDALVELIRCESHTCYLGQRGDLHAWGHGCGGCPACELRAQGWEQWTAQRSLNGA</sequence>
<dbReference type="EC" id="6.3.4.20" evidence="1"/>
<dbReference type="EMBL" id="CP001392">
    <property type="protein sequence ID" value="ACM33672.1"/>
    <property type="molecule type" value="Genomic_DNA"/>
</dbReference>
<dbReference type="RefSeq" id="WP_011805900.1">
    <property type="nucleotide sequence ID" value="NC_011992.1"/>
</dbReference>
<dbReference type="SMR" id="B9MBJ3"/>
<dbReference type="KEGG" id="dia:Dtpsy_2234"/>
<dbReference type="eggNOG" id="COG0603">
    <property type="taxonomic scope" value="Bacteria"/>
</dbReference>
<dbReference type="HOGENOM" id="CLU_081854_0_0_4"/>
<dbReference type="UniPathway" id="UPA00391"/>
<dbReference type="Proteomes" id="UP000000450">
    <property type="component" value="Chromosome"/>
</dbReference>
<dbReference type="GO" id="GO:0005524">
    <property type="term" value="F:ATP binding"/>
    <property type="evidence" value="ECO:0007669"/>
    <property type="project" value="UniProtKB-UniRule"/>
</dbReference>
<dbReference type="GO" id="GO:0016879">
    <property type="term" value="F:ligase activity, forming carbon-nitrogen bonds"/>
    <property type="evidence" value="ECO:0007669"/>
    <property type="project" value="UniProtKB-UniRule"/>
</dbReference>
<dbReference type="GO" id="GO:0008270">
    <property type="term" value="F:zinc ion binding"/>
    <property type="evidence" value="ECO:0007669"/>
    <property type="project" value="UniProtKB-UniRule"/>
</dbReference>
<dbReference type="GO" id="GO:0008616">
    <property type="term" value="P:queuosine biosynthetic process"/>
    <property type="evidence" value="ECO:0007669"/>
    <property type="project" value="UniProtKB-UniRule"/>
</dbReference>
<dbReference type="CDD" id="cd01995">
    <property type="entry name" value="QueC-like"/>
    <property type="match status" value="1"/>
</dbReference>
<dbReference type="Gene3D" id="3.40.50.620">
    <property type="entry name" value="HUPs"/>
    <property type="match status" value="1"/>
</dbReference>
<dbReference type="HAMAP" id="MF_01633">
    <property type="entry name" value="QueC"/>
    <property type="match status" value="1"/>
</dbReference>
<dbReference type="InterPro" id="IPR018317">
    <property type="entry name" value="QueC"/>
</dbReference>
<dbReference type="InterPro" id="IPR014729">
    <property type="entry name" value="Rossmann-like_a/b/a_fold"/>
</dbReference>
<dbReference type="NCBIfam" id="TIGR00364">
    <property type="entry name" value="7-cyano-7-deazaguanine synthase QueC"/>
    <property type="match status" value="1"/>
</dbReference>
<dbReference type="PANTHER" id="PTHR42914">
    <property type="entry name" value="7-CYANO-7-DEAZAGUANINE SYNTHASE"/>
    <property type="match status" value="1"/>
</dbReference>
<dbReference type="PANTHER" id="PTHR42914:SF1">
    <property type="entry name" value="7-CYANO-7-DEAZAGUANINE SYNTHASE"/>
    <property type="match status" value="1"/>
</dbReference>
<dbReference type="Pfam" id="PF06508">
    <property type="entry name" value="QueC"/>
    <property type="match status" value="1"/>
</dbReference>
<dbReference type="PIRSF" id="PIRSF006293">
    <property type="entry name" value="ExsB"/>
    <property type="match status" value="1"/>
</dbReference>
<dbReference type="SUPFAM" id="SSF52402">
    <property type="entry name" value="Adenine nucleotide alpha hydrolases-like"/>
    <property type="match status" value="1"/>
</dbReference>
<comment type="function">
    <text evidence="1">Catalyzes the ATP-dependent conversion of 7-carboxy-7-deazaguanine (CDG) to 7-cyano-7-deazaguanine (preQ(0)).</text>
</comment>
<comment type="catalytic activity">
    <reaction evidence="1">
        <text>7-carboxy-7-deazaguanine + NH4(+) + ATP = 7-cyano-7-deazaguanine + ADP + phosphate + H2O + H(+)</text>
        <dbReference type="Rhea" id="RHEA:27982"/>
        <dbReference type="ChEBI" id="CHEBI:15377"/>
        <dbReference type="ChEBI" id="CHEBI:15378"/>
        <dbReference type="ChEBI" id="CHEBI:28938"/>
        <dbReference type="ChEBI" id="CHEBI:30616"/>
        <dbReference type="ChEBI" id="CHEBI:43474"/>
        <dbReference type="ChEBI" id="CHEBI:45075"/>
        <dbReference type="ChEBI" id="CHEBI:61036"/>
        <dbReference type="ChEBI" id="CHEBI:456216"/>
        <dbReference type="EC" id="6.3.4.20"/>
    </reaction>
</comment>
<comment type="cofactor">
    <cofactor evidence="1">
        <name>Zn(2+)</name>
        <dbReference type="ChEBI" id="CHEBI:29105"/>
    </cofactor>
    <text evidence="1">Binds 1 zinc ion per subunit.</text>
</comment>
<comment type="pathway">
    <text evidence="1">Purine metabolism; 7-cyano-7-deazaguanine biosynthesis.</text>
</comment>
<comment type="similarity">
    <text evidence="1">Belongs to the QueC family.</text>
</comment>
<evidence type="ECO:0000255" key="1">
    <source>
        <dbReference type="HAMAP-Rule" id="MF_01633"/>
    </source>
</evidence>
<gene>
    <name evidence="1" type="primary">queC</name>
    <name type="ordered locus">Dtpsy_2234</name>
</gene>
<keyword id="KW-0067">ATP-binding</keyword>
<keyword id="KW-0436">Ligase</keyword>
<keyword id="KW-0479">Metal-binding</keyword>
<keyword id="KW-0547">Nucleotide-binding</keyword>
<keyword id="KW-0671">Queuosine biosynthesis</keyword>
<keyword id="KW-1185">Reference proteome</keyword>
<keyword id="KW-0862">Zinc</keyword>
<feature type="chain" id="PRO_1000186586" description="7-cyano-7-deazaguanine synthase">
    <location>
        <begin position="1"/>
        <end position="239"/>
    </location>
</feature>
<feature type="binding site" evidence="1">
    <location>
        <begin position="13"/>
        <end position="23"/>
    </location>
    <ligand>
        <name>ATP</name>
        <dbReference type="ChEBI" id="CHEBI:30616"/>
    </ligand>
</feature>
<feature type="binding site" evidence="1">
    <location>
        <position position="199"/>
    </location>
    <ligand>
        <name>Zn(2+)</name>
        <dbReference type="ChEBI" id="CHEBI:29105"/>
    </ligand>
</feature>
<feature type="binding site" evidence="1">
    <location>
        <position position="214"/>
    </location>
    <ligand>
        <name>Zn(2+)</name>
        <dbReference type="ChEBI" id="CHEBI:29105"/>
    </ligand>
</feature>
<feature type="binding site" evidence="1">
    <location>
        <position position="217"/>
    </location>
    <ligand>
        <name>Zn(2+)</name>
        <dbReference type="ChEBI" id="CHEBI:29105"/>
    </ligand>
</feature>
<feature type="binding site" evidence="1">
    <location>
        <position position="220"/>
    </location>
    <ligand>
        <name>Zn(2+)</name>
        <dbReference type="ChEBI" id="CHEBI:29105"/>
    </ligand>
</feature>
<accession>B9MBJ3</accession>
<name>QUEC_ACIET</name>
<proteinExistence type="inferred from homology"/>